<gene>
    <name evidence="1" type="primary">trpD</name>
    <name type="ordered locus">CYA_0630</name>
</gene>
<evidence type="ECO:0000255" key="1">
    <source>
        <dbReference type="HAMAP-Rule" id="MF_00211"/>
    </source>
</evidence>
<proteinExistence type="inferred from homology"/>
<keyword id="KW-0028">Amino-acid biosynthesis</keyword>
<keyword id="KW-0057">Aromatic amino acid biosynthesis</keyword>
<keyword id="KW-0328">Glycosyltransferase</keyword>
<keyword id="KW-0460">Magnesium</keyword>
<keyword id="KW-0479">Metal-binding</keyword>
<keyword id="KW-0808">Transferase</keyword>
<keyword id="KW-0822">Tryptophan biosynthesis</keyword>
<feature type="chain" id="PRO_0000325471" description="Anthranilate phosphoribosyltransferase">
    <location>
        <begin position="1"/>
        <end position="343"/>
    </location>
</feature>
<feature type="binding site" evidence="1">
    <location>
        <position position="86"/>
    </location>
    <ligand>
        <name>5-phospho-alpha-D-ribose 1-diphosphate</name>
        <dbReference type="ChEBI" id="CHEBI:58017"/>
    </ligand>
</feature>
<feature type="binding site" evidence="1">
    <location>
        <position position="86"/>
    </location>
    <ligand>
        <name>anthranilate</name>
        <dbReference type="ChEBI" id="CHEBI:16567"/>
        <label>1</label>
    </ligand>
</feature>
<feature type="binding site" evidence="1">
    <location>
        <begin position="89"/>
        <end position="90"/>
    </location>
    <ligand>
        <name>5-phospho-alpha-D-ribose 1-diphosphate</name>
        <dbReference type="ChEBI" id="CHEBI:58017"/>
    </ligand>
</feature>
<feature type="binding site" evidence="1">
    <location>
        <position position="94"/>
    </location>
    <ligand>
        <name>5-phospho-alpha-D-ribose 1-diphosphate</name>
        <dbReference type="ChEBI" id="CHEBI:58017"/>
    </ligand>
</feature>
<feature type="binding site" evidence="1">
    <location>
        <begin position="96"/>
        <end position="99"/>
    </location>
    <ligand>
        <name>5-phospho-alpha-D-ribose 1-diphosphate</name>
        <dbReference type="ChEBI" id="CHEBI:58017"/>
    </ligand>
</feature>
<feature type="binding site" evidence="1">
    <location>
        <position position="98"/>
    </location>
    <ligand>
        <name>Mg(2+)</name>
        <dbReference type="ChEBI" id="CHEBI:18420"/>
        <label>1</label>
    </ligand>
</feature>
<feature type="binding site" evidence="1">
    <location>
        <begin position="114"/>
        <end position="122"/>
    </location>
    <ligand>
        <name>5-phospho-alpha-D-ribose 1-diphosphate</name>
        <dbReference type="ChEBI" id="CHEBI:58017"/>
    </ligand>
</feature>
<feature type="binding site" evidence="1">
    <location>
        <position position="117"/>
    </location>
    <ligand>
        <name>anthranilate</name>
        <dbReference type="ChEBI" id="CHEBI:16567"/>
        <label>1</label>
    </ligand>
</feature>
<feature type="binding site" evidence="1">
    <location>
        <position position="126"/>
    </location>
    <ligand>
        <name>5-phospho-alpha-D-ribose 1-diphosphate</name>
        <dbReference type="ChEBI" id="CHEBI:58017"/>
    </ligand>
</feature>
<feature type="binding site" evidence="1">
    <location>
        <position position="172"/>
    </location>
    <ligand>
        <name>anthranilate</name>
        <dbReference type="ChEBI" id="CHEBI:16567"/>
        <label>2</label>
    </ligand>
</feature>
<feature type="binding site" evidence="1">
    <location>
        <position position="231"/>
    </location>
    <ligand>
        <name>Mg(2+)</name>
        <dbReference type="ChEBI" id="CHEBI:18420"/>
        <label>2</label>
    </ligand>
</feature>
<feature type="binding site" evidence="1">
    <location>
        <position position="232"/>
    </location>
    <ligand>
        <name>Mg(2+)</name>
        <dbReference type="ChEBI" id="CHEBI:18420"/>
        <label>1</label>
    </ligand>
</feature>
<feature type="binding site" evidence="1">
    <location>
        <position position="232"/>
    </location>
    <ligand>
        <name>Mg(2+)</name>
        <dbReference type="ChEBI" id="CHEBI:18420"/>
        <label>2</label>
    </ligand>
</feature>
<comment type="function">
    <text evidence="1">Catalyzes the transfer of the phosphoribosyl group of 5-phosphorylribose-1-pyrophosphate (PRPP) to anthranilate to yield N-(5'-phosphoribosyl)-anthranilate (PRA).</text>
</comment>
<comment type="catalytic activity">
    <reaction evidence="1">
        <text>N-(5-phospho-beta-D-ribosyl)anthranilate + diphosphate = 5-phospho-alpha-D-ribose 1-diphosphate + anthranilate</text>
        <dbReference type="Rhea" id="RHEA:11768"/>
        <dbReference type="ChEBI" id="CHEBI:16567"/>
        <dbReference type="ChEBI" id="CHEBI:18277"/>
        <dbReference type="ChEBI" id="CHEBI:33019"/>
        <dbReference type="ChEBI" id="CHEBI:58017"/>
        <dbReference type="EC" id="2.4.2.18"/>
    </reaction>
</comment>
<comment type="cofactor">
    <cofactor evidence="1">
        <name>Mg(2+)</name>
        <dbReference type="ChEBI" id="CHEBI:18420"/>
    </cofactor>
    <text evidence="1">Binds 2 magnesium ions per monomer.</text>
</comment>
<comment type="pathway">
    <text evidence="1">Amino-acid biosynthesis; L-tryptophan biosynthesis; L-tryptophan from chorismate: step 2/5.</text>
</comment>
<comment type="subunit">
    <text evidence="1">Homodimer.</text>
</comment>
<comment type="similarity">
    <text evidence="1">Belongs to the anthranilate phosphoribosyltransferase family.</text>
</comment>
<name>TRPD_SYNJA</name>
<reference key="1">
    <citation type="journal article" date="2007" name="ISME J.">
        <title>Population level functional diversity in a microbial community revealed by comparative genomic and metagenomic analyses.</title>
        <authorList>
            <person name="Bhaya D."/>
            <person name="Grossman A.R."/>
            <person name="Steunou A.-S."/>
            <person name="Khuri N."/>
            <person name="Cohan F.M."/>
            <person name="Hamamura N."/>
            <person name="Melendrez M.C."/>
            <person name="Bateson M.M."/>
            <person name="Ward D.M."/>
            <person name="Heidelberg J.F."/>
        </authorList>
    </citation>
    <scope>NUCLEOTIDE SEQUENCE [LARGE SCALE GENOMIC DNA]</scope>
    <source>
        <strain>JA-3-3Ab</strain>
    </source>
</reference>
<accession>Q2JWL5</accession>
<sequence>MTETADLWPQLLGQLLERQSLSEAQAEQLMNGWLHNQVPDVVSGAILAALQAKGVSASELAGMARVLQRASLGSPLDLPLLVDTCGTGGDGAGTFNISTAVAFVVSAAGIPVVKHGNRSASGKVGSADVLEALGVNLSAEPEQVRAAVAEVGITFLFAPHWHPAMRAVIPYRRALKVRTVFNLLGPLVNPLYPNRQVIGVYAPELVPVMAEALRLLGRERAVVLHSREGLDEAGLDQPTDLGILSGGLVRTEVLNPRDYDLTPAPVQALQGGNLAENAAILAQVLQGSGAPAQRDVVALNAALALQVAGAVPDWGSGIAQAREILASGAAWDRLQKLVNFLAS</sequence>
<dbReference type="EC" id="2.4.2.18" evidence="1"/>
<dbReference type="EMBL" id="CP000239">
    <property type="protein sequence ID" value="ABC98844.1"/>
    <property type="molecule type" value="Genomic_DNA"/>
</dbReference>
<dbReference type="RefSeq" id="WP_011429527.1">
    <property type="nucleotide sequence ID" value="NC_007775.1"/>
</dbReference>
<dbReference type="SMR" id="Q2JWL5"/>
<dbReference type="STRING" id="321327.CYA_0630"/>
<dbReference type="KEGG" id="cya:CYA_0630"/>
<dbReference type="eggNOG" id="COG0547">
    <property type="taxonomic scope" value="Bacteria"/>
</dbReference>
<dbReference type="HOGENOM" id="CLU_034315_2_1_3"/>
<dbReference type="OrthoDB" id="9806430at2"/>
<dbReference type="UniPathway" id="UPA00035">
    <property type="reaction ID" value="UER00041"/>
</dbReference>
<dbReference type="Proteomes" id="UP000008818">
    <property type="component" value="Chromosome"/>
</dbReference>
<dbReference type="GO" id="GO:0005829">
    <property type="term" value="C:cytosol"/>
    <property type="evidence" value="ECO:0007669"/>
    <property type="project" value="TreeGrafter"/>
</dbReference>
<dbReference type="GO" id="GO:0004048">
    <property type="term" value="F:anthranilate phosphoribosyltransferase activity"/>
    <property type="evidence" value="ECO:0007669"/>
    <property type="project" value="UniProtKB-UniRule"/>
</dbReference>
<dbReference type="GO" id="GO:0000287">
    <property type="term" value="F:magnesium ion binding"/>
    <property type="evidence" value="ECO:0007669"/>
    <property type="project" value="UniProtKB-UniRule"/>
</dbReference>
<dbReference type="GO" id="GO:0000162">
    <property type="term" value="P:L-tryptophan biosynthetic process"/>
    <property type="evidence" value="ECO:0007669"/>
    <property type="project" value="UniProtKB-UniRule"/>
</dbReference>
<dbReference type="FunFam" id="3.40.1030.10:FF:000002">
    <property type="entry name" value="Anthranilate phosphoribosyltransferase"/>
    <property type="match status" value="1"/>
</dbReference>
<dbReference type="Gene3D" id="3.40.1030.10">
    <property type="entry name" value="Nucleoside phosphorylase/phosphoribosyltransferase catalytic domain"/>
    <property type="match status" value="1"/>
</dbReference>
<dbReference type="Gene3D" id="1.20.970.10">
    <property type="entry name" value="Transferase, Pyrimidine Nucleoside Phosphorylase, Chain C"/>
    <property type="match status" value="1"/>
</dbReference>
<dbReference type="HAMAP" id="MF_00211">
    <property type="entry name" value="TrpD"/>
    <property type="match status" value="1"/>
</dbReference>
<dbReference type="InterPro" id="IPR005940">
    <property type="entry name" value="Anthranilate_Pribosyl_Tfrase"/>
</dbReference>
<dbReference type="InterPro" id="IPR000312">
    <property type="entry name" value="Glycosyl_Trfase_fam3"/>
</dbReference>
<dbReference type="InterPro" id="IPR017459">
    <property type="entry name" value="Glycosyl_Trfase_fam3_N_dom"/>
</dbReference>
<dbReference type="InterPro" id="IPR036320">
    <property type="entry name" value="Glycosyl_Trfase_fam3_N_dom_sf"/>
</dbReference>
<dbReference type="InterPro" id="IPR035902">
    <property type="entry name" value="Nuc_phospho_transferase"/>
</dbReference>
<dbReference type="NCBIfam" id="TIGR01245">
    <property type="entry name" value="trpD"/>
    <property type="match status" value="1"/>
</dbReference>
<dbReference type="PANTHER" id="PTHR43285">
    <property type="entry name" value="ANTHRANILATE PHOSPHORIBOSYLTRANSFERASE"/>
    <property type="match status" value="1"/>
</dbReference>
<dbReference type="PANTHER" id="PTHR43285:SF2">
    <property type="entry name" value="ANTHRANILATE PHOSPHORIBOSYLTRANSFERASE"/>
    <property type="match status" value="1"/>
</dbReference>
<dbReference type="Pfam" id="PF02885">
    <property type="entry name" value="Glycos_trans_3N"/>
    <property type="match status" value="1"/>
</dbReference>
<dbReference type="Pfam" id="PF00591">
    <property type="entry name" value="Glycos_transf_3"/>
    <property type="match status" value="1"/>
</dbReference>
<dbReference type="SUPFAM" id="SSF52418">
    <property type="entry name" value="Nucleoside phosphorylase/phosphoribosyltransferase catalytic domain"/>
    <property type="match status" value="1"/>
</dbReference>
<dbReference type="SUPFAM" id="SSF47648">
    <property type="entry name" value="Nucleoside phosphorylase/phosphoribosyltransferase N-terminal domain"/>
    <property type="match status" value="1"/>
</dbReference>
<protein>
    <recommendedName>
        <fullName evidence="1">Anthranilate phosphoribosyltransferase</fullName>
        <ecNumber evidence="1">2.4.2.18</ecNumber>
    </recommendedName>
</protein>
<organism>
    <name type="scientific">Synechococcus sp. (strain JA-3-3Ab)</name>
    <name type="common">Cyanobacteria bacterium Yellowstone A-Prime</name>
    <dbReference type="NCBI Taxonomy" id="321327"/>
    <lineage>
        <taxon>Bacteria</taxon>
        <taxon>Bacillati</taxon>
        <taxon>Cyanobacteriota</taxon>
        <taxon>Cyanophyceae</taxon>
        <taxon>Synechococcales</taxon>
        <taxon>Synechococcaceae</taxon>
        <taxon>Synechococcus</taxon>
    </lineage>
</organism>